<gene>
    <name evidence="1" type="primary">ruvB</name>
    <name type="ordered locus">SYNW0135</name>
</gene>
<evidence type="ECO:0000255" key="1">
    <source>
        <dbReference type="HAMAP-Rule" id="MF_00016"/>
    </source>
</evidence>
<evidence type="ECO:0000256" key="2">
    <source>
        <dbReference type="SAM" id="MobiDB-lite"/>
    </source>
</evidence>
<name>RUVB_PARMW</name>
<reference key="1">
    <citation type="journal article" date="2003" name="Nature">
        <title>The genome of a motile marine Synechococcus.</title>
        <authorList>
            <person name="Palenik B."/>
            <person name="Brahamsha B."/>
            <person name="Larimer F.W."/>
            <person name="Land M.L."/>
            <person name="Hauser L."/>
            <person name="Chain P."/>
            <person name="Lamerdin J.E."/>
            <person name="Regala W."/>
            <person name="Allen E.E."/>
            <person name="McCarren J."/>
            <person name="Paulsen I.T."/>
            <person name="Dufresne A."/>
            <person name="Partensky F."/>
            <person name="Webb E.A."/>
            <person name="Waterbury J."/>
        </authorList>
    </citation>
    <scope>NUCLEOTIDE SEQUENCE [LARGE SCALE GENOMIC DNA]</scope>
    <source>
        <strain>WH8102</strain>
    </source>
</reference>
<organism>
    <name type="scientific">Parasynechococcus marenigrum (strain WH8102)</name>
    <dbReference type="NCBI Taxonomy" id="84588"/>
    <lineage>
        <taxon>Bacteria</taxon>
        <taxon>Bacillati</taxon>
        <taxon>Cyanobacteriota</taxon>
        <taxon>Cyanophyceae</taxon>
        <taxon>Synechococcales</taxon>
        <taxon>Prochlorococcaceae</taxon>
        <taxon>Parasynechococcus</taxon>
        <taxon>Parasynechococcus marenigrum</taxon>
    </lineage>
</organism>
<protein>
    <recommendedName>
        <fullName evidence="1">Holliday junction branch migration complex subunit RuvB</fullName>
        <ecNumber evidence="1">3.6.4.-</ecNumber>
    </recommendedName>
</protein>
<sequence>MAIVSSNAGSSAPRREPVLDAQPLPEESSGRPDDGLRPKRLDDYIGQDELKQVLGIAVQAALGRGDALDHVLLYGPPGLGKTTMALVLAEELGVTCRITSAPALERPRDIVGLLVNVQPRDLLFIDEIHRLNRVSEELLYPAMEDRRLDLTVGKGSTARTRSLELPPFTLVGATTKAGSLSSPLRDRFGLIQRLEFYGQEDLEAIVSRTADLLGVSLSAGACRRIAGCCRGTPRIANRLLRRVRDVACVQGRQNQIDEGLVSQALSLHRVDHRGLDAGDRRLLAQLDQHHDGGPVGLETLAAALGEDPTTLESVVEPFLLQQGLLVRTPRGRMLTEAARAHLREQEVA</sequence>
<keyword id="KW-0067">ATP-binding</keyword>
<keyword id="KW-0963">Cytoplasm</keyword>
<keyword id="KW-0227">DNA damage</keyword>
<keyword id="KW-0233">DNA recombination</keyword>
<keyword id="KW-0234">DNA repair</keyword>
<keyword id="KW-0238">DNA-binding</keyword>
<keyword id="KW-0378">Hydrolase</keyword>
<keyword id="KW-0547">Nucleotide-binding</keyword>
<comment type="function">
    <text evidence="1">The RuvA-RuvB-RuvC complex processes Holliday junction (HJ) DNA during genetic recombination and DNA repair, while the RuvA-RuvB complex plays an important role in the rescue of blocked DNA replication forks via replication fork reversal (RFR). RuvA specifically binds to HJ cruciform DNA, conferring on it an open structure. The RuvB hexamer acts as an ATP-dependent pump, pulling dsDNA into and through the RuvAB complex. RuvB forms 2 homohexamers on either side of HJ DNA bound by 1 or 2 RuvA tetramers; 4 subunits per hexamer contact DNA at a time. Coordinated motions by a converter formed by DNA-disengaged RuvB subunits stimulates ATP hydrolysis and nucleotide exchange. Immobilization of the converter enables RuvB to convert the ATP-contained energy into a lever motion, pulling 2 nucleotides of DNA out of the RuvA tetramer per ATP hydrolyzed, thus driving DNA branch migration. The RuvB motors rotate together with the DNA substrate, which together with the progressing nucleotide cycle form the mechanistic basis for DNA recombination by continuous HJ branch migration. Branch migration allows RuvC to scan DNA until it finds its consensus sequence, where it cleaves and resolves cruciform DNA.</text>
</comment>
<comment type="catalytic activity">
    <reaction evidence="1">
        <text>ATP + H2O = ADP + phosphate + H(+)</text>
        <dbReference type="Rhea" id="RHEA:13065"/>
        <dbReference type="ChEBI" id="CHEBI:15377"/>
        <dbReference type="ChEBI" id="CHEBI:15378"/>
        <dbReference type="ChEBI" id="CHEBI:30616"/>
        <dbReference type="ChEBI" id="CHEBI:43474"/>
        <dbReference type="ChEBI" id="CHEBI:456216"/>
    </reaction>
</comment>
<comment type="subunit">
    <text evidence="1">Homohexamer. Forms an RuvA(8)-RuvB(12)-Holliday junction (HJ) complex. HJ DNA is sandwiched between 2 RuvA tetramers; dsDNA enters through RuvA and exits via RuvB. An RuvB hexamer assembles on each DNA strand where it exits the tetramer. Each RuvB hexamer is contacted by two RuvA subunits (via domain III) on 2 adjacent RuvB subunits; this complex drives branch migration. In the full resolvosome a probable DNA-RuvA(4)-RuvB(12)-RuvC(2) complex forms which resolves the HJ.</text>
</comment>
<comment type="subcellular location">
    <subcellularLocation>
        <location evidence="1">Cytoplasm</location>
    </subcellularLocation>
</comment>
<comment type="domain">
    <text evidence="1">Has 3 domains, the large (RuvB-L) and small ATPase (RuvB-S) domains and the C-terminal head (RuvB-H) domain. The head domain binds DNA, while the ATPase domains jointly bind ATP, ADP or are empty depending on the state of the subunit in the translocation cycle. During a single DNA translocation step the structure of each domain remains the same, but their relative positions change.</text>
</comment>
<comment type="similarity">
    <text evidence="1">Belongs to the RuvB family.</text>
</comment>
<proteinExistence type="inferred from homology"/>
<feature type="chain" id="PRO_0000165615" description="Holliday junction branch migration complex subunit RuvB">
    <location>
        <begin position="1"/>
        <end position="348"/>
    </location>
</feature>
<feature type="region of interest" description="Disordered" evidence="2">
    <location>
        <begin position="1"/>
        <end position="41"/>
    </location>
</feature>
<feature type="region of interest" description="Large ATPase domain (RuvB-L)" evidence="1">
    <location>
        <begin position="13"/>
        <end position="197"/>
    </location>
</feature>
<feature type="region of interest" description="Small ATPAse domain (RuvB-S)" evidence="1">
    <location>
        <begin position="198"/>
        <end position="269"/>
    </location>
</feature>
<feature type="region of interest" description="Head domain (RuvB-H)" evidence="1">
    <location>
        <begin position="272"/>
        <end position="348"/>
    </location>
</feature>
<feature type="compositionally biased region" description="Polar residues" evidence="2">
    <location>
        <begin position="1"/>
        <end position="10"/>
    </location>
</feature>
<feature type="compositionally biased region" description="Basic and acidic residues" evidence="2">
    <location>
        <begin position="28"/>
        <end position="41"/>
    </location>
</feature>
<feature type="binding site" evidence="1">
    <location>
        <position position="36"/>
    </location>
    <ligand>
        <name>ATP</name>
        <dbReference type="ChEBI" id="CHEBI:30616"/>
    </ligand>
</feature>
<feature type="binding site" evidence="1">
    <location>
        <position position="37"/>
    </location>
    <ligand>
        <name>ATP</name>
        <dbReference type="ChEBI" id="CHEBI:30616"/>
    </ligand>
</feature>
<feature type="binding site" evidence="1">
    <location>
        <position position="78"/>
    </location>
    <ligand>
        <name>ATP</name>
        <dbReference type="ChEBI" id="CHEBI:30616"/>
    </ligand>
</feature>
<feature type="binding site" evidence="1">
    <location>
        <position position="81"/>
    </location>
    <ligand>
        <name>ATP</name>
        <dbReference type="ChEBI" id="CHEBI:30616"/>
    </ligand>
</feature>
<feature type="binding site" evidence="1">
    <location>
        <position position="82"/>
    </location>
    <ligand>
        <name>ATP</name>
        <dbReference type="ChEBI" id="CHEBI:30616"/>
    </ligand>
</feature>
<feature type="binding site" evidence="1">
    <location>
        <position position="82"/>
    </location>
    <ligand>
        <name>Mg(2+)</name>
        <dbReference type="ChEBI" id="CHEBI:18420"/>
    </ligand>
</feature>
<feature type="binding site" evidence="1">
    <location>
        <position position="83"/>
    </location>
    <ligand>
        <name>ATP</name>
        <dbReference type="ChEBI" id="CHEBI:30616"/>
    </ligand>
</feature>
<feature type="binding site" evidence="1">
    <location>
        <position position="187"/>
    </location>
    <ligand>
        <name>ATP</name>
        <dbReference type="ChEBI" id="CHEBI:30616"/>
    </ligand>
</feature>
<feature type="binding site" evidence="1">
    <location>
        <position position="197"/>
    </location>
    <ligand>
        <name>ATP</name>
        <dbReference type="ChEBI" id="CHEBI:30616"/>
    </ligand>
</feature>
<feature type="binding site" evidence="1">
    <location>
        <position position="234"/>
    </location>
    <ligand>
        <name>ATP</name>
        <dbReference type="ChEBI" id="CHEBI:30616"/>
    </ligand>
</feature>
<feature type="binding site" evidence="1">
    <location>
        <position position="327"/>
    </location>
    <ligand>
        <name>DNA</name>
        <dbReference type="ChEBI" id="CHEBI:16991"/>
    </ligand>
</feature>
<feature type="binding site" evidence="1">
    <location>
        <position position="332"/>
    </location>
    <ligand>
        <name>DNA</name>
        <dbReference type="ChEBI" id="CHEBI:16991"/>
    </ligand>
</feature>
<accession>Q7U9W7</accession>
<dbReference type="EC" id="3.6.4.-" evidence="1"/>
<dbReference type="EMBL" id="BX569689">
    <property type="protein sequence ID" value="CAE06650.1"/>
    <property type="molecule type" value="Genomic_DNA"/>
</dbReference>
<dbReference type="RefSeq" id="WP_011127012.1">
    <property type="nucleotide sequence ID" value="NC_005070.1"/>
</dbReference>
<dbReference type="SMR" id="Q7U9W7"/>
<dbReference type="STRING" id="84588.SYNW0135"/>
<dbReference type="KEGG" id="syw:SYNW0135"/>
<dbReference type="eggNOG" id="COG2255">
    <property type="taxonomic scope" value="Bacteria"/>
</dbReference>
<dbReference type="HOGENOM" id="CLU_055599_1_0_3"/>
<dbReference type="Proteomes" id="UP000001422">
    <property type="component" value="Chromosome"/>
</dbReference>
<dbReference type="GO" id="GO:0005737">
    <property type="term" value="C:cytoplasm"/>
    <property type="evidence" value="ECO:0007669"/>
    <property type="project" value="UniProtKB-SubCell"/>
</dbReference>
<dbReference type="GO" id="GO:0048476">
    <property type="term" value="C:Holliday junction resolvase complex"/>
    <property type="evidence" value="ECO:0007669"/>
    <property type="project" value="UniProtKB-UniRule"/>
</dbReference>
<dbReference type="GO" id="GO:0005524">
    <property type="term" value="F:ATP binding"/>
    <property type="evidence" value="ECO:0007669"/>
    <property type="project" value="UniProtKB-UniRule"/>
</dbReference>
<dbReference type="GO" id="GO:0016887">
    <property type="term" value="F:ATP hydrolysis activity"/>
    <property type="evidence" value="ECO:0007669"/>
    <property type="project" value="InterPro"/>
</dbReference>
<dbReference type="GO" id="GO:0000400">
    <property type="term" value="F:four-way junction DNA binding"/>
    <property type="evidence" value="ECO:0007669"/>
    <property type="project" value="UniProtKB-UniRule"/>
</dbReference>
<dbReference type="GO" id="GO:0009378">
    <property type="term" value="F:four-way junction helicase activity"/>
    <property type="evidence" value="ECO:0007669"/>
    <property type="project" value="InterPro"/>
</dbReference>
<dbReference type="GO" id="GO:0006310">
    <property type="term" value="P:DNA recombination"/>
    <property type="evidence" value="ECO:0007669"/>
    <property type="project" value="UniProtKB-UniRule"/>
</dbReference>
<dbReference type="GO" id="GO:0006281">
    <property type="term" value="P:DNA repair"/>
    <property type="evidence" value="ECO:0007669"/>
    <property type="project" value="UniProtKB-UniRule"/>
</dbReference>
<dbReference type="CDD" id="cd00009">
    <property type="entry name" value="AAA"/>
    <property type="match status" value="1"/>
</dbReference>
<dbReference type="Gene3D" id="1.10.8.60">
    <property type="match status" value="1"/>
</dbReference>
<dbReference type="Gene3D" id="3.40.50.300">
    <property type="entry name" value="P-loop containing nucleotide triphosphate hydrolases"/>
    <property type="match status" value="1"/>
</dbReference>
<dbReference type="Gene3D" id="1.10.10.10">
    <property type="entry name" value="Winged helix-like DNA-binding domain superfamily/Winged helix DNA-binding domain"/>
    <property type="match status" value="1"/>
</dbReference>
<dbReference type="HAMAP" id="MF_00016">
    <property type="entry name" value="DNA_HJ_migration_RuvB"/>
    <property type="match status" value="1"/>
</dbReference>
<dbReference type="InterPro" id="IPR003593">
    <property type="entry name" value="AAA+_ATPase"/>
</dbReference>
<dbReference type="InterPro" id="IPR041445">
    <property type="entry name" value="AAA_lid_4"/>
</dbReference>
<dbReference type="InterPro" id="IPR004605">
    <property type="entry name" value="DNA_helicase_Holl-junc_RuvB"/>
</dbReference>
<dbReference type="InterPro" id="IPR027417">
    <property type="entry name" value="P-loop_NTPase"/>
</dbReference>
<dbReference type="InterPro" id="IPR008824">
    <property type="entry name" value="RuvB-like_N"/>
</dbReference>
<dbReference type="InterPro" id="IPR008823">
    <property type="entry name" value="RuvB_C"/>
</dbReference>
<dbReference type="InterPro" id="IPR036388">
    <property type="entry name" value="WH-like_DNA-bd_sf"/>
</dbReference>
<dbReference type="InterPro" id="IPR036390">
    <property type="entry name" value="WH_DNA-bd_sf"/>
</dbReference>
<dbReference type="NCBIfam" id="NF000868">
    <property type="entry name" value="PRK00080.1"/>
    <property type="match status" value="1"/>
</dbReference>
<dbReference type="NCBIfam" id="TIGR00635">
    <property type="entry name" value="ruvB"/>
    <property type="match status" value="1"/>
</dbReference>
<dbReference type="PANTHER" id="PTHR42848">
    <property type="match status" value="1"/>
</dbReference>
<dbReference type="PANTHER" id="PTHR42848:SF1">
    <property type="entry name" value="HOLLIDAY JUNCTION BRANCH MIGRATION COMPLEX SUBUNIT RUVB"/>
    <property type="match status" value="1"/>
</dbReference>
<dbReference type="Pfam" id="PF17864">
    <property type="entry name" value="AAA_lid_4"/>
    <property type="match status" value="1"/>
</dbReference>
<dbReference type="Pfam" id="PF05491">
    <property type="entry name" value="RuvB_C"/>
    <property type="match status" value="1"/>
</dbReference>
<dbReference type="Pfam" id="PF05496">
    <property type="entry name" value="RuvB_N"/>
    <property type="match status" value="1"/>
</dbReference>
<dbReference type="SMART" id="SM00382">
    <property type="entry name" value="AAA"/>
    <property type="match status" value="1"/>
</dbReference>
<dbReference type="SUPFAM" id="SSF52540">
    <property type="entry name" value="P-loop containing nucleoside triphosphate hydrolases"/>
    <property type="match status" value="1"/>
</dbReference>
<dbReference type="SUPFAM" id="SSF46785">
    <property type="entry name" value="Winged helix' DNA-binding domain"/>
    <property type="match status" value="1"/>
</dbReference>